<dbReference type="EMBL" id="AK003691">
    <property type="protein sequence ID" value="BAB22942.1"/>
    <property type="molecule type" value="mRNA"/>
</dbReference>
<dbReference type="EMBL" id="AK028808">
    <property type="protein sequence ID" value="BAC26129.1"/>
    <property type="molecule type" value="mRNA"/>
</dbReference>
<dbReference type="EMBL" id="AK053788">
    <property type="protein sequence ID" value="BAC35523.1"/>
    <property type="molecule type" value="mRNA"/>
</dbReference>
<dbReference type="EMBL" id="AK090022">
    <property type="protein sequence ID" value="BAC41051.1"/>
    <property type="molecule type" value="mRNA"/>
</dbReference>
<dbReference type="EMBL" id="BC057639">
    <property type="protein sequence ID" value="AAH57639.1"/>
    <property type="molecule type" value="mRNA"/>
</dbReference>
<dbReference type="CCDS" id="CCDS20567.1"/>
<dbReference type="RefSeq" id="NP_081019.1">
    <property type="nucleotide sequence ID" value="NM_026743.3"/>
</dbReference>
<dbReference type="RefSeq" id="XP_036008174.1">
    <property type="nucleotide sequence ID" value="XM_036152281.1"/>
</dbReference>
<dbReference type="SMR" id="Q9D1D1"/>
<dbReference type="FunCoup" id="Q9D1D1">
    <property type="interactions" value="27"/>
</dbReference>
<dbReference type="STRING" id="10090.ENSMUSP00000032501"/>
<dbReference type="GlyCosmos" id="Q9D1D1">
    <property type="glycosylation" value="1 site, No reported glycans"/>
</dbReference>
<dbReference type="GlyGen" id="Q9D1D1">
    <property type="glycosylation" value="2 sites, 1 N-linked glycan (1 site), 1 O-linked glycan (1 site)"/>
</dbReference>
<dbReference type="iPTMnet" id="Q9D1D1"/>
<dbReference type="PhosphoSitePlus" id="Q9D1D1"/>
<dbReference type="PaxDb" id="10090-ENSMUSP00000032501"/>
<dbReference type="ProteomicsDB" id="297982"/>
<dbReference type="Pumba" id="Q9D1D1"/>
<dbReference type="Antibodypedia" id="42427">
    <property type="antibodies" value="30 antibodies from 14 providers"/>
</dbReference>
<dbReference type="DNASU" id="68498"/>
<dbReference type="Ensembl" id="ENSMUST00000032501.6">
    <property type="protein sequence ID" value="ENSMUSP00000032501.5"/>
    <property type="gene ID" value="ENSMUSG00000030351.6"/>
</dbReference>
<dbReference type="GeneID" id="68498"/>
<dbReference type="KEGG" id="mmu:68498"/>
<dbReference type="UCSC" id="uc009ecn.1">
    <property type="organism name" value="mouse"/>
</dbReference>
<dbReference type="AGR" id="MGI:1915748"/>
<dbReference type="CTD" id="441631"/>
<dbReference type="MGI" id="MGI:1915748">
    <property type="gene designation" value="Tspan11"/>
</dbReference>
<dbReference type="VEuPathDB" id="HostDB:ENSMUSG00000030351"/>
<dbReference type="eggNOG" id="KOG3882">
    <property type="taxonomic scope" value="Eukaryota"/>
</dbReference>
<dbReference type="GeneTree" id="ENSGT00940000161249"/>
<dbReference type="HOGENOM" id="CLU_055524_5_0_1"/>
<dbReference type="InParanoid" id="Q9D1D1"/>
<dbReference type="OMA" id="HCGQRAH"/>
<dbReference type="OrthoDB" id="438211at2759"/>
<dbReference type="PhylomeDB" id="Q9D1D1"/>
<dbReference type="TreeFam" id="TF352892"/>
<dbReference type="BioGRID-ORCS" id="68498">
    <property type="hits" value="1 hit in 77 CRISPR screens"/>
</dbReference>
<dbReference type="PRO" id="PR:Q9D1D1"/>
<dbReference type="Proteomes" id="UP000000589">
    <property type="component" value="Chromosome 6"/>
</dbReference>
<dbReference type="RNAct" id="Q9D1D1">
    <property type="molecule type" value="protein"/>
</dbReference>
<dbReference type="Bgee" id="ENSMUSG00000030351">
    <property type="expression patterns" value="Expressed in ascending aorta and 104 other cell types or tissues"/>
</dbReference>
<dbReference type="GO" id="GO:0016020">
    <property type="term" value="C:membrane"/>
    <property type="evidence" value="ECO:0007669"/>
    <property type="project" value="UniProtKB-SubCell"/>
</dbReference>
<dbReference type="CDD" id="cd03155">
    <property type="entry name" value="CD151_like_LEL"/>
    <property type="match status" value="1"/>
</dbReference>
<dbReference type="FunFam" id="1.10.1450.10:FF:000005">
    <property type="entry name" value="Tetraspanin"/>
    <property type="match status" value="1"/>
</dbReference>
<dbReference type="Gene3D" id="1.10.1450.10">
    <property type="entry name" value="Tetraspanin"/>
    <property type="match status" value="1"/>
</dbReference>
<dbReference type="InterPro" id="IPR018499">
    <property type="entry name" value="Tetraspanin/Peripherin"/>
</dbReference>
<dbReference type="InterPro" id="IPR000301">
    <property type="entry name" value="Tetraspanin_animals"/>
</dbReference>
<dbReference type="InterPro" id="IPR008952">
    <property type="entry name" value="Tetraspanin_EC2_sf"/>
</dbReference>
<dbReference type="PANTHER" id="PTHR19282">
    <property type="entry name" value="TETRASPANIN"/>
    <property type="match status" value="1"/>
</dbReference>
<dbReference type="PANTHER" id="PTHR19282:SF198">
    <property type="entry name" value="TETRASPANIN-11"/>
    <property type="match status" value="1"/>
</dbReference>
<dbReference type="Pfam" id="PF00335">
    <property type="entry name" value="Tetraspanin"/>
    <property type="match status" value="1"/>
</dbReference>
<dbReference type="PIRSF" id="PIRSF002419">
    <property type="entry name" value="Tetraspanin"/>
    <property type="match status" value="1"/>
</dbReference>
<dbReference type="PRINTS" id="PR00259">
    <property type="entry name" value="TMFOUR"/>
</dbReference>
<dbReference type="SUPFAM" id="SSF48652">
    <property type="entry name" value="Tetraspanin"/>
    <property type="match status" value="1"/>
</dbReference>
<sequence>MAHCKTEQDDWLLAHLKYLLFIFNFFFWVGGAAVMAVGIWTLVEKSGYLSILASSTFAASAYILIFVGGLVMTTGFLGFGAIIREQKSCLSTYFCLLLVIFLVELVAGVLAHVYYQRLSDELKWHLNSTLTEHYGQPRAAEITASVDRLQQDFKCCGSNSSADWQHSAYILSQEALGRQVPDSCCKTVVARCGQRAHPSNIYKVEGGCMAKLEQFVADHLLLMGAVGIGVACLQICGMVLTCCLHRRLQQQFY</sequence>
<organism>
    <name type="scientific">Mus musculus</name>
    <name type="common">Mouse</name>
    <dbReference type="NCBI Taxonomy" id="10090"/>
    <lineage>
        <taxon>Eukaryota</taxon>
        <taxon>Metazoa</taxon>
        <taxon>Chordata</taxon>
        <taxon>Craniata</taxon>
        <taxon>Vertebrata</taxon>
        <taxon>Euteleostomi</taxon>
        <taxon>Mammalia</taxon>
        <taxon>Eutheria</taxon>
        <taxon>Euarchontoglires</taxon>
        <taxon>Glires</taxon>
        <taxon>Rodentia</taxon>
        <taxon>Myomorpha</taxon>
        <taxon>Muroidea</taxon>
        <taxon>Muridae</taxon>
        <taxon>Murinae</taxon>
        <taxon>Mus</taxon>
        <taxon>Mus</taxon>
    </lineage>
</organism>
<gene>
    <name type="primary">Tspan11</name>
</gene>
<name>TSN11_MOUSE</name>
<feature type="chain" id="PRO_0000311906" description="Tetraspanin-11">
    <location>
        <begin position="1"/>
        <end position="253"/>
    </location>
</feature>
<feature type="transmembrane region" description="Helical" evidence="1">
    <location>
        <begin position="19"/>
        <end position="39"/>
    </location>
</feature>
<feature type="transmembrane region" description="Helical" evidence="1">
    <location>
        <begin position="63"/>
        <end position="83"/>
    </location>
</feature>
<feature type="transmembrane region" description="Helical" evidence="1">
    <location>
        <begin position="93"/>
        <end position="113"/>
    </location>
</feature>
<feature type="transmembrane region" description="Helical" evidence="1">
    <location>
        <begin position="220"/>
        <end position="240"/>
    </location>
</feature>
<feature type="glycosylation site" description="N-linked (GlcNAc...) asparagine" evidence="1">
    <location>
        <position position="127"/>
    </location>
</feature>
<reference key="1">
    <citation type="journal article" date="2005" name="Science">
        <title>The transcriptional landscape of the mammalian genome.</title>
        <authorList>
            <person name="Carninci P."/>
            <person name="Kasukawa T."/>
            <person name="Katayama S."/>
            <person name="Gough J."/>
            <person name="Frith M.C."/>
            <person name="Maeda N."/>
            <person name="Oyama R."/>
            <person name="Ravasi T."/>
            <person name="Lenhard B."/>
            <person name="Wells C."/>
            <person name="Kodzius R."/>
            <person name="Shimokawa K."/>
            <person name="Bajic V.B."/>
            <person name="Brenner S.E."/>
            <person name="Batalov S."/>
            <person name="Forrest A.R."/>
            <person name="Zavolan M."/>
            <person name="Davis M.J."/>
            <person name="Wilming L.G."/>
            <person name="Aidinis V."/>
            <person name="Allen J.E."/>
            <person name="Ambesi-Impiombato A."/>
            <person name="Apweiler R."/>
            <person name="Aturaliya R.N."/>
            <person name="Bailey T.L."/>
            <person name="Bansal M."/>
            <person name="Baxter L."/>
            <person name="Beisel K.W."/>
            <person name="Bersano T."/>
            <person name="Bono H."/>
            <person name="Chalk A.M."/>
            <person name="Chiu K.P."/>
            <person name="Choudhary V."/>
            <person name="Christoffels A."/>
            <person name="Clutterbuck D.R."/>
            <person name="Crowe M.L."/>
            <person name="Dalla E."/>
            <person name="Dalrymple B.P."/>
            <person name="de Bono B."/>
            <person name="Della Gatta G."/>
            <person name="di Bernardo D."/>
            <person name="Down T."/>
            <person name="Engstrom P."/>
            <person name="Fagiolini M."/>
            <person name="Faulkner G."/>
            <person name="Fletcher C.F."/>
            <person name="Fukushima T."/>
            <person name="Furuno M."/>
            <person name="Futaki S."/>
            <person name="Gariboldi M."/>
            <person name="Georgii-Hemming P."/>
            <person name="Gingeras T.R."/>
            <person name="Gojobori T."/>
            <person name="Green R.E."/>
            <person name="Gustincich S."/>
            <person name="Harbers M."/>
            <person name="Hayashi Y."/>
            <person name="Hensch T.K."/>
            <person name="Hirokawa N."/>
            <person name="Hill D."/>
            <person name="Huminiecki L."/>
            <person name="Iacono M."/>
            <person name="Ikeo K."/>
            <person name="Iwama A."/>
            <person name="Ishikawa T."/>
            <person name="Jakt M."/>
            <person name="Kanapin A."/>
            <person name="Katoh M."/>
            <person name="Kawasawa Y."/>
            <person name="Kelso J."/>
            <person name="Kitamura H."/>
            <person name="Kitano H."/>
            <person name="Kollias G."/>
            <person name="Krishnan S.P."/>
            <person name="Kruger A."/>
            <person name="Kummerfeld S.K."/>
            <person name="Kurochkin I.V."/>
            <person name="Lareau L.F."/>
            <person name="Lazarevic D."/>
            <person name="Lipovich L."/>
            <person name="Liu J."/>
            <person name="Liuni S."/>
            <person name="McWilliam S."/>
            <person name="Madan Babu M."/>
            <person name="Madera M."/>
            <person name="Marchionni L."/>
            <person name="Matsuda H."/>
            <person name="Matsuzawa S."/>
            <person name="Miki H."/>
            <person name="Mignone F."/>
            <person name="Miyake S."/>
            <person name="Morris K."/>
            <person name="Mottagui-Tabar S."/>
            <person name="Mulder N."/>
            <person name="Nakano N."/>
            <person name="Nakauchi H."/>
            <person name="Ng P."/>
            <person name="Nilsson R."/>
            <person name="Nishiguchi S."/>
            <person name="Nishikawa S."/>
            <person name="Nori F."/>
            <person name="Ohara O."/>
            <person name="Okazaki Y."/>
            <person name="Orlando V."/>
            <person name="Pang K.C."/>
            <person name="Pavan W.J."/>
            <person name="Pavesi G."/>
            <person name="Pesole G."/>
            <person name="Petrovsky N."/>
            <person name="Piazza S."/>
            <person name="Reed J."/>
            <person name="Reid J.F."/>
            <person name="Ring B.Z."/>
            <person name="Ringwald M."/>
            <person name="Rost B."/>
            <person name="Ruan Y."/>
            <person name="Salzberg S.L."/>
            <person name="Sandelin A."/>
            <person name="Schneider C."/>
            <person name="Schoenbach C."/>
            <person name="Sekiguchi K."/>
            <person name="Semple C.A."/>
            <person name="Seno S."/>
            <person name="Sessa L."/>
            <person name="Sheng Y."/>
            <person name="Shibata Y."/>
            <person name="Shimada H."/>
            <person name="Shimada K."/>
            <person name="Silva D."/>
            <person name="Sinclair B."/>
            <person name="Sperling S."/>
            <person name="Stupka E."/>
            <person name="Sugiura K."/>
            <person name="Sultana R."/>
            <person name="Takenaka Y."/>
            <person name="Taki K."/>
            <person name="Tammoja K."/>
            <person name="Tan S.L."/>
            <person name="Tang S."/>
            <person name="Taylor M.S."/>
            <person name="Tegner J."/>
            <person name="Teichmann S.A."/>
            <person name="Ueda H.R."/>
            <person name="van Nimwegen E."/>
            <person name="Verardo R."/>
            <person name="Wei C.L."/>
            <person name="Yagi K."/>
            <person name="Yamanishi H."/>
            <person name="Zabarovsky E."/>
            <person name="Zhu S."/>
            <person name="Zimmer A."/>
            <person name="Hide W."/>
            <person name="Bult C."/>
            <person name="Grimmond S.M."/>
            <person name="Teasdale R.D."/>
            <person name="Liu E.T."/>
            <person name="Brusic V."/>
            <person name="Quackenbush J."/>
            <person name="Wahlestedt C."/>
            <person name="Mattick J.S."/>
            <person name="Hume D.A."/>
            <person name="Kai C."/>
            <person name="Sasaki D."/>
            <person name="Tomaru Y."/>
            <person name="Fukuda S."/>
            <person name="Kanamori-Katayama M."/>
            <person name="Suzuki M."/>
            <person name="Aoki J."/>
            <person name="Arakawa T."/>
            <person name="Iida J."/>
            <person name="Imamura K."/>
            <person name="Itoh M."/>
            <person name="Kato T."/>
            <person name="Kawaji H."/>
            <person name="Kawagashira N."/>
            <person name="Kawashima T."/>
            <person name="Kojima M."/>
            <person name="Kondo S."/>
            <person name="Konno H."/>
            <person name="Nakano K."/>
            <person name="Ninomiya N."/>
            <person name="Nishio T."/>
            <person name="Okada M."/>
            <person name="Plessy C."/>
            <person name="Shibata K."/>
            <person name="Shiraki T."/>
            <person name="Suzuki S."/>
            <person name="Tagami M."/>
            <person name="Waki K."/>
            <person name="Watahiki A."/>
            <person name="Okamura-Oho Y."/>
            <person name="Suzuki H."/>
            <person name="Kawai J."/>
            <person name="Hayashizaki Y."/>
        </authorList>
    </citation>
    <scope>NUCLEOTIDE SEQUENCE [LARGE SCALE MRNA]</scope>
    <source>
        <strain>C57BL/6J</strain>
        <tissue>Colon</tissue>
        <tissue>Eye</tissue>
        <tissue>Skin</tissue>
    </source>
</reference>
<reference key="2">
    <citation type="journal article" date="2004" name="Genome Res.">
        <title>The status, quality, and expansion of the NIH full-length cDNA project: the Mammalian Gene Collection (MGC).</title>
        <authorList>
            <consortium name="The MGC Project Team"/>
        </authorList>
    </citation>
    <scope>NUCLEOTIDE SEQUENCE [LARGE SCALE MRNA]</scope>
    <source>
        <strain>FVB/N</strain>
        <tissue>Colon</tissue>
    </source>
</reference>
<evidence type="ECO:0000255" key="1"/>
<evidence type="ECO:0000305" key="2"/>
<keyword id="KW-0325">Glycoprotein</keyword>
<keyword id="KW-0472">Membrane</keyword>
<keyword id="KW-1185">Reference proteome</keyword>
<keyword id="KW-0812">Transmembrane</keyword>
<keyword id="KW-1133">Transmembrane helix</keyword>
<proteinExistence type="evidence at transcript level"/>
<accession>Q9D1D1</accession>
<comment type="subcellular location">
    <subcellularLocation>
        <location evidence="2">Membrane</location>
        <topology evidence="2">Multi-pass membrane protein</topology>
    </subcellularLocation>
</comment>
<comment type="similarity">
    <text evidence="2">Belongs to the tetraspanin (TM4SF) family.</text>
</comment>
<protein>
    <recommendedName>
        <fullName>Tetraspanin-11</fullName>
        <shortName>Tspan-11</shortName>
    </recommendedName>
</protein>